<evidence type="ECO:0000255" key="1">
    <source>
        <dbReference type="HAMAP-Rule" id="MF_01365"/>
    </source>
</evidence>
<evidence type="ECO:0000305" key="2"/>
<proteinExistence type="inferred from homology"/>
<protein>
    <recommendedName>
        <fullName evidence="1">Large ribosomal subunit protein uL6</fullName>
    </recommendedName>
    <alternativeName>
        <fullName evidence="2">50S ribosomal protein L6</fullName>
    </alternativeName>
</protein>
<reference key="1">
    <citation type="journal article" date="2000" name="Nature">
        <title>Genome sequence of the endocellular bacterial symbiont of aphids Buchnera sp. APS.</title>
        <authorList>
            <person name="Shigenobu S."/>
            <person name="Watanabe H."/>
            <person name="Hattori M."/>
            <person name="Sakaki Y."/>
            <person name="Ishikawa H."/>
        </authorList>
    </citation>
    <scope>NUCLEOTIDE SEQUENCE [LARGE SCALE GENOMIC DNA]</scope>
    <source>
        <strain>APS</strain>
    </source>
</reference>
<name>RL6_BUCAI</name>
<feature type="chain" id="PRO_0000131040" description="Large ribosomal subunit protein uL6">
    <location>
        <begin position="1"/>
        <end position="178"/>
    </location>
</feature>
<comment type="function">
    <text evidence="1">This protein binds to the 23S rRNA, and is important in its secondary structure. It is located near the subunit interface in the base of the L7/L12 stalk, and near the tRNA binding site of the peptidyltransferase center.</text>
</comment>
<comment type="subunit">
    <text evidence="1">Part of the 50S ribosomal subunit.</text>
</comment>
<comment type="similarity">
    <text evidence="1">Belongs to the universal ribosomal protein uL6 family.</text>
</comment>
<comment type="sequence caution" evidence="2">
    <conflict type="erroneous initiation">
        <sequence resource="EMBL-CDS" id="BAB13202"/>
    </conflict>
</comment>
<dbReference type="EMBL" id="BA000003">
    <property type="protein sequence ID" value="BAB13202.1"/>
    <property type="status" value="ALT_INIT"/>
    <property type="molecule type" value="Genomic_DNA"/>
</dbReference>
<dbReference type="RefSeq" id="NP_240316.3">
    <property type="nucleotide sequence ID" value="NC_002528.1"/>
</dbReference>
<dbReference type="RefSeq" id="WP_009874460.1">
    <property type="nucleotide sequence ID" value="NZ_AP036055.1"/>
</dbReference>
<dbReference type="SMR" id="P57576"/>
<dbReference type="STRING" id="563178.BUAP5A_502"/>
<dbReference type="EnsemblBacteria" id="BAB13202">
    <property type="protein sequence ID" value="BAB13202"/>
    <property type="gene ID" value="BAB13202"/>
</dbReference>
<dbReference type="KEGG" id="buc:BU509"/>
<dbReference type="PATRIC" id="fig|107806.10.peg.514"/>
<dbReference type="eggNOG" id="COG0097">
    <property type="taxonomic scope" value="Bacteria"/>
</dbReference>
<dbReference type="HOGENOM" id="CLU_065464_1_2_6"/>
<dbReference type="Proteomes" id="UP000001806">
    <property type="component" value="Chromosome"/>
</dbReference>
<dbReference type="GO" id="GO:0022625">
    <property type="term" value="C:cytosolic large ribosomal subunit"/>
    <property type="evidence" value="ECO:0007669"/>
    <property type="project" value="TreeGrafter"/>
</dbReference>
<dbReference type="GO" id="GO:0019843">
    <property type="term" value="F:rRNA binding"/>
    <property type="evidence" value="ECO:0007669"/>
    <property type="project" value="UniProtKB-UniRule"/>
</dbReference>
<dbReference type="GO" id="GO:0003735">
    <property type="term" value="F:structural constituent of ribosome"/>
    <property type="evidence" value="ECO:0007669"/>
    <property type="project" value="InterPro"/>
</dbReference>
<dbReference type="GO" id="GO:0002181">
    <property type="term" value="P:cytoplasmic translation"/>
    <property type="evidence" value="ECO:0007669"/>
    <property type="project" value="TreeGrafter"/>
</dbReference>
<dbReference type="FunFam" id="3.90.930.12:FF:000001">
    <property type="entry name" value="50S ribosomal protein L6"/>
    <property type="match status" value="1"/>
</dbReference>
<dbReference type="Gene3D" id="3.90.930.12">
    <property type="entry name" value="Ribosomal protein L6, alpha-beta domain"/>
    <property type="match status" value="2"/>
</dbReference>
<dbReference type="HAMAP" id="MF_01365_B">
    <property type="entry name" value="Ribosomal_uL6_B"/>
    <property type="match status" value="1"/>
</dbReference>
<dbReference type="InterPro" id="IPR000702">
    <property type="entry name" value="Ribosomal_uL6-like"/>
</dbReference>
<dbReference type="InterPro" id="IPR036789">
    <property type="entry name" value="Ribosomal_uL6-like_a/b-dom_sf"/>
</dbReference>
<dbReference type="InterPro" id="IPR020040">
    <property type="entry name" value="Ribosomal_uL6_a/b-dom"/>
</dbReference>
<dbReference type="InterPro" id="IPR019906">
    <property type="entry name" value="Ribosomal_uL6_bac-type"/>
</dbReference>
<dbReference type="InterPro" id="IPR002358">
    <property type="entry name" value="Ribosomal_uL6_CS"/>
</dbReference>
<dbReference type="NCBIfam" id="TIGR03654">
    <property type="entry name" value="L6_bact"/>
    <property type="match status" value="1"/>
</dbReference>
<dbReference type="PANTHER" id="PTHR11655">
    <property type="entry name" value="60S/50S RIBOSOMAL PROTEIN L6/L9"/>
    <property type="match status" value="1"/>
</dbReference>
<dbReference type="PANTHER" id="PTHR11655:SF14">
    <property type="entry name" value="LARGE RIBOSOMAL SUBUNIT PROTEIN UL6M"/>
    <property type="match status" value="1"/>
</dbReference>
<dbReference type="Pfam" id="PF00347">
    <property type="entry name" value="Ribosomal_L6"/>
    <property type="match status" value="2"/>
</dbReference>
<dbReference type="PIRSF" id="PIRSF002162">
    <property type="entry name" value="Ribosomal_L6"/>
    <property type="match status" value="1"/>
</dbReference>
<dbReference type="PRINTS" id="PR00059">
    <property type="entry name" value="RIBOSOMALL6"/>
</dbReference>
<dbReference type="SUPFAM" id="SSF56053">
    <property type="entry name" value="Ribosomal protein L6"/>
    <property type="match status" value="2"/>
</dbReference>
<dbReference type="PROSITE" id="PS00525">
    <property type="entry name" value="RIBOSOMAL_L6_1"/>
    <property type="match status" value="1"/>
</dbReference>
<keyword id="KW-1185">Reference proteome</keyword>
<keyword id="KW-0687">Ribonucleoprotein</keyword>
<keyword id="KW-0689">Ribosomal protein</keyword>
<keyword id="KW-0694">RNA-binding</keyword>
<keyword id="KW-0699">rRNA-binding</keyword>
<gene>
    <name evidence="1" type="primary">rplF</name>
    <name type="ordered locus">BU509</name>
</gene>
<sequence length="178" mass="19751">MSRVAKCPIVIPSGVNVQLDLQDISIKGKYGHLSRTIHQSVKIEFLNNQIIFSPRLGFSNGWAQAGTSRALVNSMIIGVSEKFSKKLQLSGVGYRVSITKDNIINMSLGYSHIITYHLPKGINAENLSPTEIIIQGIDKQLVGQIAANLRSYRTPEPYKGKGIRYSNEVVRIKEAKKK</sequence>
<organism>
    <name type="scientific">Buchnera aphidicola subsp. Acyrthosiphon pisum (strain APS)</name>
    <name type="common">Acyrthosiphon pisum symbiotic bacterium</name>
    <dbReference type="NCBI Taxonomy" id="107806"/>
    <lineage>
        <taxon>Bacteria</taxon>
        <taxon>Pseudomonadati</taxon>
        <taxon>Pseudomonadota</taxon>
        <taxon>Gammaproteobacteria</taxon>
        <taxon>Enterobacterales</taxon>
        <taxon>Erwiniaceae</taxon>
        <taxon>Buchnera</taxon>
    </lineage>
</organism>
<accession>P57576</accession>